<reference key="1">
    <citation type="submission" date="2008-05" db="EMBL/GenBank/DDBJ databases">
        <title>Complete genome sequence of Clostridium botulinum E3 str. Alaska E43.</title>
        <authorList>
            <person name="Brinkac L.M."/>
            <person name="Brown J.L."/>
            <person name="Bruce D."/>
            <person name="Detter C."/>
            <person name="Munk C."/>
            <person name="Smith L.A."/>
            <person name="Smith T.J."/>
            <person name="Sutton G."/>
            <person name="Brettin T.S."/>
        </authorList>
    </citation>
    <scope>NUCLEOTIDE SEQUENCE [LARGE SCALE GENOMIC DNA]</scope>
    <source>
        <strain>Alaska E43 / Type E3</strain>
    </source>
</reference>
<feature type="chain" id="PRO_1000144994" description="Protein translocase subunit SecA">
    <location>
        <begin position="1"/>
        <end position="836"/>
    </location>
</feature>
<feature type="binding site" evidence="1">
    <location>
        <position position="85"/>
    </location>
    <ligand>
        <name>ATP</name>
        <dbReference type="ChEBI" id="CHEBI:30616"/>
    </ligand>
</feature>
<feature type="binding site" evidence="1">
    <location>
        <begin position="103"/>
        <end position="107"/>
    </location>
    <ligand>
        <name>ATP</name>
        <dbReference type="ChEBI" id="CHEBI:30616"/>
    </ligand>
</feature>
<feature type="binding site" evidence="1">
    <location>
        <position position="492"/>
    </location>
    <ligand>
        <name>ATP</name>
        <dbReference type="ChEBI" id="CHEBI:30616"/>
    </ligand>
</feature>
<feature type="binding site" evidence="1">
    <location>
        <position position="820"/>
    </location>
    <ligand>
        <name>Zn(2+)</name>
        <dbReference type="ChEBI" id="CHEBI:29105"/>
    </ligand>
</feature>
<feature type="binding site" evidence="1">
    <location>
        <position position="822"/>
    </location>
    <ligand>
        <name>Zn(2+)</name>
        <dbReference type="ChEBI" id="CHEBI:29105"/>
    </ligand>
</feature>
<feature type="binding site" evidence="1">
    <location>
        <position position="831"/>
    </location>
    <ligand>
        <name>Zn(2+)</name>
        <dbReference type="ChEBI" id="CHEBI:29105"/>
    </ligand>
</feature>
<feature type="binding site" evidence="1">
    <location>
        <position position="832"/>
    </location>
    <ligand>
        <name>Zn(2+)</name>
        <dbReference type="ChEBI" id="CHEBI:29105"/>
    </ligand>
</feature>
<gene>
    <name evidence="1" type="primary">secA</name>
    <name type="ordered locus">CLH_0512</name>
</gene>
<accession>B2UZL5</accession>
<comment type="function">
    <text evidence="1">Part of the Sec protein translocase complex. Interacts with the SecYEG preprotein conducting channel. Has a central role in coupling the hydrolysis of ATP to the transfer of proteins into and across the cell membrane, serving as an ATP-driven molecular motor driving the stepwise translocation of polypeptide chains across the membrane.</text>
</comment>
<comment type="catalytic activity">
    <reaction evidence="1">
        <text>ATP + H2O + cellular proteinSide 1 = ADP + phosphate + cellular proteinSide 2.</text>
        <dbReference type="EC" id="7.4.2.8"/>
    </reaction>
</comment>
<comment type="cofactor">
    <cofactor evidence="1">
        <name>Zn(2+)</name>
        <dbReference type="ChEBI" id="CHEBI:29105"/>
    </cofactor>
    <text evidence="1">May bind 1 zinc ion per subunit.</text>
</comment>
<comment type="subunit">
    <text evidence="1">Monomer and homodimer. Part of the essential Sec protein translocation apparatus which comprises SecA, SecYEG and auxiliary proteins SecDF. Other proteins may also be involved.</text>
</comment>
<comment type="subcellular location">
    <subcellularLocation>
        <location evidence="1">Cell membrane</location>
        <topology evidence="1">Peripheral membrane protein</topology>
        <orientation evidence="1">Cytoplasmic side</orientation>
    </subcellularLocation>
    <subcellularLocation>
        <location evidence="1">Cytoplasm</location>
    </subcellularLocation>
    <text evidence="1">Distribution is 50-50.</text>
</comment>
<comment type="similarity">
    <text evidence="1">Belongs to the SecA family.</text>
</comment>
<protein>
    <recommendedName>
        <fullName evidence="1">Protein translocase subunit SecA</fullName>
        <ecNumber evidence="1">7.4.2.8</ecNumber>
    </recommendedName>
</protein>
<proteinExistence type="inferred from homology"/>
<sequence length="836" mass="94708">MGLLSAVFGTYSEREVKRIRPIVSKINELDEVMQKLSDDELKAKTVEFKERLNNGETVDDILPEAFAVVREASKRVLNMKHYDEQLIGGVVLHQGRIAEMKTGEGKTLVATLPAYLNGLTGKGVHIITVNDYLAKRDAEQMGELYGFLGLTTGVIVHELTNEQRREAYNSDITYGTNNEFGFDYLRDNMVIYKEERVQRKLNFTIVDEVDSILIDEARTPLIISGQGEKSTEFYKVADYFVKTLVKEKDYTIDEKANAVMLTDEGFHKAEQTFKVENYADAENVELQHYVTQALKANYAMRRDKDYMVKDGEVIIVDEFTGRLMEGRRYSDGLHQAIEAKENVKIARESKTLATITFQNYFRMYEKLSGMTGTALTEENEFREIYGLDVIVVPTHKPVVRIDNPDLVFKSEKGKIMAVVDEIAKAHEVGQPVLVGTVSIEKSELISSMLKKKGVPHQVLNAKFHEQEAEIITHAGEKGMVTIATNMAGRGTDIKLGEGVLEIGGLKIIGTERHESRRIDNQLRGRSGRQGDSGESTFFISLEDDLMRIFGSEKIQGVVEKLGLEEDEAIESKLVSKSIENAQKKVEGNNFDIRKTLLGYDDVMNKQREVIYKQRSEVLEGEDVKEEILHMLRDVISDAVNTHIKEDAEDYRESFLYLISYLNDICIPTNEVNLPALADMSKEEIVDHLYDVAVKSYENKEAEFTPERLREIERVVLLRSVDTKWMDHINNMDNLKQGIGLRAFKQVDPVQAYQMEGSAMFEEMIDSIKNETVKMLFHVKVERAPERVRVAQETNAVHGDKPSAPVGPVRNLNKFGRNDVCPCGSGKKFKNCCGREA</sequence>
<dbReference type="EC" id="7.4.2.8" evidence="1"/>
<dbReference type="EMBL" id="CP001078">
    <property type="protein sequence ID" value="ACD52757.1"/>
    <property type="molecule type" value="Genomic_DNA"/>
</dbReference>
<dbReference type="RefSeq" id="WP_003370042.1">
    <property type="nucleotide sequence ID" value="NC_010723.1"/>
</dbReference>
<dbReference type="SMR" id="B2UZL5"/>
<dbReference type="KEGG" id="cbt:CLH_0512"/>
<dbReference type="HOGENOM" id="CLU_005314_3_0_9"/>
<dbReference type="GO" id="GO:0031522">
    <property type="term" value="C:cell envelope Sec protein transport complex"/>
    <property type="evidence" value="ECO:0007669"/>
    <property type="project" value="TreeGrafter"/>
</dbReference>
<dbReference type="GO" id="GO:0005829">
    <property type="term" value="C:cytosol"/>
    <property type="evidence" value="ECO:0007669"/>
    <property type="project" value="TreeGrafter"/>
</dbReference>
<dbReference type="GO" id="GO:0005886">
    <property type="term" value="C:plasma membrane"/>
    <property type="evidence" value="ECO:0007669"/>
    <property type="project" value="UniProtKB-SubCell"/>
</dbReference>
<dbReference type="GO" id="GO:0005524">
    <property type="term" value="F:ATP binding"/>
    <property type="evidence" value="ECO:0007669"/>
    <property type="project" value="UniProtKB-UniRule"/>
</dbReference>
<dbReference type="GO" id="GO:0046872">
    <property type="term" value="F:metal ion binding"/>
    <property type="evidence" value="ECO:0007669"/>
    <property type="project" value="UniProtKB-KW"/>
</dbReference>
<dbReference type="GO" id="GO:0008564">
    <property type="term" value="F:protein-exporting ATPase activity"/>
    <property type="evidence" value="ECO:0007669"/>
    <property type="project" value="UniProtKB-EC"/>
</dbReference>
<dbReference type="GO" id="GO:0065002">
    <property type="term" value="P:intracellular protein transmembrane transport"/>
    <property type="evidence" value="ECO:0007669"/>
    <property type="project" value="UniProtKB-UniRule"/>
</dbReference>
<dbReference type="GO" id="GO:0017038">
    <property type="term" value="P:protein import"/>
    <property type="evidence" value="ECO:0007669"/>
    <property type="project" value="InterPro"/>
</dbReference>
<dbReference type="GO" id="GO:0006605">
    <property type="term" value="P:protein targeting"/>
    <property type="evidence" value="ECO:0007669"/>
    <property type="project" value="UniProtKB-UniRule"/>
</dbReference>
<dbReference type="GO" id="GO:0043952">
    <property type="term" value="P:protein transport by the Sec complex"/>
    <property type="evidence" value="ECO:0007669"/>
    <property type="project" value="TreeGrafter"/>
</dbReference>
<dbReference type="CDD" id="cd17928">
    <property type="entry name" value="DEXDc_SecA"/>
    <property type="match status" value="1"/>
</dbReference>
<dbReference type="CDD" id="cd18803">
    <property type="entry name" value="SF2_C_secA"/>
    <property type="match status" value="1"/>
</dbReference>
<dbReference type="FunFam" id="1.10.3060.10:FF:000002">
    <property type="entry name" value="Preprotein translocase subunit SecA"/>
    <property type="match status" value="1"/>
</dbReference>
<dbReference type="FunFam" id="3.40.50.300:FF:000429">
    <property type="entry name" value="Preprotein translocase subunit SecA"/>
    <property type="match status" value="1"/>
</dbReference>
<dbReference type="FunFam" id="3.90.1440.10:FF:000001">
    <property type="entry name" value="Preprotein translocase subunit SecA"/>
    <property type="match status" value="1"/>
</dbReference>
<dbReference type="FunFam" id="3.40.50.300:FF:000334">
    <property type="entry name" value="Protein translocase subunit SecA"/>
    <property type="match status" value="1"/>
</dbReference>
<dbReference type="Gene3D" id="1.10.3060.10">
    <property type="entry name" value="Helical scaffold and wing domains of SecA"/>
    <property type="match status" value="1"/>
</dbReference>
<dbReference type="Gene3D" id="3.40.50.300">
    <property type="entry name" value="P-loop containing nucleotide triphosphate hydrolases"/>
    <property type="match status" value="3"/>
</dbReference>
<dbReference type="Gene3D" id="3.90.1440.10">
    <property type="entry name" value="SecA, preprotein cross-linking domain"/>
    <property type="match status" value="1"/>
</dbReference>
<dbReference type="HAMAP" id="MF_01382">
    <property type="entry name" value="SecA"/>
    <property type="match status" value="1"/>
</dbReference>
<dbReference type="InterPro" id="IPR014001">
    <property type="entry name" value="Helicase_ATP-bd"/>
</dbReference>
<dbReference type="InterPro" id="IPR001650">
    <property type="entry name" value="Helicase_C-like"/>
</dbReference>
<dbReference type="InterPro" id="IPR027417">
    <property type="entry name" value="P-loop_NTPase"/>
</dbReference>
<dbReference type="InterPro" id="IPR004027">
    <property type="entry name" value="SEC_C_motif"/>
</dbReference>
<dbReference type="InterPro" id="IPR000185">
    <property type="entry name" value="SecA"/>
</dbReference>
<dbReference type="InterPro" id="IPR020937">
    <property type="entry name" value="SecA_CS"/>
</dbReference>
<dbReference type="InterPro" id="IPR011115">
    <property type="entry name" value="SecA_DEAD"/>
</dbReference>
<dbReference type="InterPro" id="IPR014018">
    <property type="entry name" value="SecA_motor_DEAD"/>
</dbReference>
<dbReference type="InterPro" id="IPR011130">
    <property type="entry name" value="SecA_preprotein_X-link_dom"/>
</dbReference>
<dbReference type="InterPro" id="IPR044722">
    <property type="entry name" value="SecA_SF2_C"/>
</dbReference>
<dbReference type="InterPro" id="IPR011116">
    <property type="entry name" value="SecA_Wing/Scaffold"/>
</dbReference>
<dbReference type="InterPro" id="IPR036266">
    <property type="entry name" value="SecA_Wing/Scaffold_sf"/>
</dbReference>
<dbReference type="InterPro" id="IPR036670">
    <property type="entry name" value="SecA_X-link_sf"/>
</dbReference>
<dbReference type="NCBIfam" id="NF006630">
    <property type="entry name" value="PRK09200.1"/>
    <property type="match status" value="1"/>
</dbReference>
<dbReference type="NCBIfam" id="NF009538">
    <property type="entry name" value="PRK12904.1"/>
    <property type="match status" value="1"/>
</dbReference>
<dbReference type="NCBIfam" id="TIGR00963">
    <property type="entry name" value="secA"/>
    <property type="match status" value="1"/>
</dbReference>
<dbReference type="PANTHER" id="PTHR30612:SF0">
    <property type="entry name" value="CHLOROPLAST PROTEIN-TRANSPORTING ATPASE"/>
    <property type="match status" value="1"/>
</dbReference>
<dbReference type="PANTHER" id="PTHR30612">
    <property type="entry name" value="SECA INNER MEMBRANE COMPONENT OF SEC PROTEIN SECRETION SYSTEM"/>
    <property type="match status" value="1"/>
</dbReference>
<dbReference type="Pfam" id="PF21090">
    <property type="entry name" value="P-loop_SecA"/>
    <property type="match status" value="2"/>
</dbReference>
<dbReference type="Pfam" id="PF02810">
    <property type="entry name" value="SEC-C"/>
    <property type="match status" value="1"/>
</dbReference>
<dbReference type="Pfam" id="PF07517">
    <property type="entry name" value="SecA_DEAD"/>
    <property type="match status" value="1"/>
</dbReference>
<dbReference type="Pfam" id="PF01043">
    <property type="entry name" value="SecA_PP_bind"/>
    <property type="match status" value="1"/>
</dbReference>
<dbReference type="Pfam" id="PF07516">
    <property type="entry name" value="SecA_SW"/>
    <property type="match status" value="1"/>
</dbReference>
<dbReference type="PRINTS" id="PR00906">
    <property type="entry name" value="SECA"/>
</dbReference>
<dbReference type="SMART" id="SM00957">
    <property type="entry name" value="SecA_DEAD"/>
    <property type="match status" value="1"/>
</dbReference>
<dbReference type="SMART" id="SM00958">
    <property type="entry name" value="SecA_PP_bind"/>
    <property type="match status" value="1"/>
</dbReference>
<dbReference type="SUPFAM" id="SSF81886">
    <property type="entry name" value="Helical scaffold and wing domains of SecA"/>
    <property type="match status" value="1"/>
</dbReference>
<dbReference type="SUPFAM" id="SSF52540">
    <property type="entry name" value="P-loop containing nucleoside triphosphate hydrolases"/>
    <property type="match status" value="2"/>
</dbReference>
<dbReference type="SUPFAM" id="SSF81767">
    <property type="entry name" value="Pre-protein crosslinking domain of SecA"/>
    <property type="match status" value="1"/>
</dbReference>
<dbReference type="PROSITE" id="PS01312">
    <property type="entry name" value="SECA"/>
    <property type="match status" value="1"/>
</dbReference>
<dbReference type="PROSITE" id="PS51196">
    <property type="entry name" value="SECA_MOTOR_DEAD"/>
    <property type="match status" value="1"/>
</dbReference>
<name>SECA_CLOBA</name>
<evidence type="ECO:0000255" key="1">
    <source>
        <dbReference type="HAMAP-Rule" id="MF_01382"/>
    </source>
</evidence>
<keyword id="KW-0067">ATP-binding</keyword>
<keyword id="KW-1003">Cell membrane</keyword>
<keyword id="KW-0963">Cytoplasm</keyword>
<keyword id="KW-0472">Membrane</keyword>
<keyword id="KW-0479">Metal-binding</keyword>
<keyword id="KW-0547">Nucleotide-binding</keyword>
<keyword id="KW-0653">Protein transport</keyword>
<keyword id="KW-1278">Translocase</keyword>
<keyword id="KW-0811">Translocation</keyword>
<keyword id="KW-0813">Transport</keyword>
<keyword id="KW-0862">Zinc</keyword>
<organism>
    <name type="scientific">Clostridium botulinum (strain Alaska E43 / Type E3)</name>
    <dbReference type="NCBI Taxonomy" id="508767"/>
    <lineage>
        <taxon>Bacteria</taxon>
        <taxon>Bacillati</taxon>
        <taxon>Bacillota</taxon>
        <taxon>Clostridia</taxon>
        <taxon>Eubacteriales</taxon>
        <taxon>Clostridiaceae</taxon>
        <taxon>Clostridium</taxon>
    </lineage>
</organism>